<organism>
    <name type="scientific">Escherichia coli O157:H7</name>
    <dbReference type="NCBI Taxonomy" id="83334"/>
    <lineage>
        <taxon>Bacteria</taxon>
        <taxon>Pseudomonadati</taxon>
        <taxon>Pseudomonadota</taxon>
        <taxon>Gammaproteobacteria</taxon>
        <taxon>Enterobacterales</taxon>
        <taxon>Enterobacteriaceae</taxon>
        <taxon>Escherichia</taxon>
    </lineage>
</organism>
<gene>
    <name type="primary">bcsC</name>
    <name type="ordered locus">Z4944/Z4945</name>
    <name type="ordered locus">ECs4410</name>
</gene>
<name>BCSC_ECO57</name>
<evidence type="ECO:0000250" key="1"/>
<evidence type="ECO:0000255" key="2"/>
<evidence type="ECO:0000305" key="3"/>
<feature type="signal peptide" evidence="2">
    <location>
        <begin position="1"/>
        <end position="23"/>
    </location>
</feature>
<feature type="chain" id="PRO_0000106430" description="Putative cellulose synthase operon protein C">
    <location>
        <begin position="24"/>
        <end position="1154"/>
    </location>
</feature>
<feature type="repeat" description="TPR 1">
    <location>
        <begin position="62"/>
        <end position="95"/>
    </location>
</feature>
<feature type="repeat" description="TPR 2">
    <location>
        <begin position="266"/>
        <end position="299"/>
    </location>
</feature>
<feature type="repeat" description="TPR 3">
    <location>
        <begin position="300"/>
        <end position="333"/>
    </location>
</feature>
<feature type="repeat" description="TPR 4">
    <location>
        <begin position="348"/>
        <end position="381"/>
    </location>
</feature>
<feature type="repeat" description="TPR 5">
    <location>
        <begin position="382"/>
        <end position="415"/>
    </location>
</feature>
<feature type="repeat" description="TPR 6">
    <location>
        <begin position="458"/>
        <end position="491"/>
    </location>
</feature>
<feature type="repeat" description="TPR 7">
    <location>
        <begin position="600"/>
        <end position="633"/>
    </location>
</feature>
<feature type="repeat" description="TPR 8">
    <location>
        <begin position="707"/>
        <end position="741"/>
    </location>
</feature>
<protein>
    <recommendedName>
        <fullName>Putative cellulose synthase operon protein C</fullName>
    </recommendedName>
</protein>
<sequence>MRKFTLNIFTLSLGLAVMPMVEAAPTAQQQLLEQVRLGEATHREDLVQQSLYRLELIDPNNPDVVAARFRSLLRQGDIDGAQKQLDRLSQLAPSSNAYKSSRTTMLLSTPDGRQALQQARLQATTGHAEEAVANLFNGAPPEGDIAVEYWSTVAKIPARRGEAINQLKRINADEPGNTGLQNNLALLLFSSDRRDEGFAVLEQMAKSNAGREGASKIWYGQIKDMPVSDASVSALKKYLSIFSDGDSVAAAQSQLAEQQKQLADPAFRARAQGLAAVDSGMAGKAIPELQQAVRANPKDSEALGALGQAYSQKGDRANAVANLEKALALDPHSSNNDKWNSLLKVNRYWLAIQQGDAALKANNPDRAERLFQQARNVDNTDSYAVLGLGDVAMARKDYPAAERYYQQTLRMDSGNTNAVRGLANIYRQQSPEKAEAFIASLSASQRRSIDDIERSLQNDRLAQQAEALENQGKWAQAAALQRQRLALDPGSVWITYRLSQDLWQAGQRSQADTLMRNLAQQKPNDPEQVYAYGLYLSGHDQDRAALAHINSLPRAQWSSNIQELVNRLQSDQVLETANRLRESGKEAEAEAMLRQQPPSTRIDLTLADWALQRRDYTAARAAYQNVLTREPTNADAILGLTEVDIAAGDTAAARSQLAKLPATDNASLNTQRRVALAQAQLGDTAAAQQTFNKLIPQAKSQPPSMESAMVLRDGAKFEAQAGDPKQALETYKDAMVASGVTTTRPQDNDTFTRLTRNDEKDDWLKRGVRSDAADLYRQQDLNVTLEHDYWGSSGTGGYSDLKAHTTMLQVDAPYSDGRMFFRSDFVNMNVGSFSTNADGKWDDNWGTCTLRDCSGNRSQSDSGASVAVGWRNDVWSWDIGTTPMGFNVVDVVGGISYSDDIGPLGYTVNAHRRPISSSLLAFGGQKDFPSNTGKKWGGVRADGVGLSLSYDKGEANGVWASLSGDQLTGKNVEDNWRVRWMTGYYYKVINQNNRRVTIGLNNMIWHYDKDLSGYSLGQGGYYSPQEYLSFAIPVMWRERTENWSWELGASGSWSHSRTKTMPRYPLMNLIPTDWQEEAARQSNDGGSSQGFGYTARALLERRVTSNWFVGTAIDIQQAKDYAPSHFLLYVRYSAAGWQGDMDLPPQPLIPYADW</sequence>
<dbReference type="EMBL" id="AE005174">
    <property type="protein sequence ID" value="AAG58672.1"/>
    <property type="status" value="ALT_FRAME"/>
    <property type="molecule type" value="Genomic_DNA"/>
</dbReference>
<dbReference type="EMBL" id="AE005174">
    <property type="protein sequence ID" value="AAG58671.1"/>
    <property type="status" value="ALT_SEQ"/>
    <property type="molecule type" value="Genomic_DNA"/>
</dbReference>
<dbReference type="EMBL" id="BA000007">
    <property type="protein sequence ID" value="BAB37833.1"/>
    <property type="status" value="ALT_SEQ"/>
    <property type="molecule type" value="Genomic_DNA"/>
</dbReference>
<dbReference type="PIR" id="B91180">
    <property type="entry name" value="B91180"/>
</dbReference>
<dbReference type="PIR" id="C86026">
    <property type="entry name" value="C86026"/>
</dbReference>
<dbReference type="PIR" id="D86026">
    <property type="entry name" value="D86026"/>
</dbReference>
<dbReference type="RefSeq" id="NP_312437.1">
    <property type="nucleotide sequence ID" value="NC_002695.1"/>
</dbReference>
<dbReference type="SMR" id="Q8X5M0"/>
<dbReference type="STRING" id="155864.Z4944"/>
<dbReference type="KEGG" id="ece:Z4944"/>
<dbReference type="KEGG" id="ece:Z4945"/>
<dbReference type="PATRIC" id="fig|386585.9.peg.4610"/>
<dbReference type="eggNOG" id="COG0457">
    <property type="taxonomic scope" value="Bacteria"/>
</dbReference>
<dbReference type="eggNOG" id="COG3118">
    <property type="taxonomic scope" value="Bacteria"/>
</dbReference>
<dbReference type="HOGENOM" id="CLU_001631_2_0_6"/>
<dbReference type="UniPathway" id="UPA00694"/>
<dbReference type="Proteomes" id="UP000000558">
    <property type="component" value="Chromosome"/>
</dbReference>
<dbReference type="Proteomes" id="UP000002519">
    <property type="component" value="Chromosome"/>
</dbReference>
<dbReference type="GO" id="GO:0019867">
    <property type="term" value="C:outer membrane"/>
    <property type="evidence" value="ECO:0007669"/>
    <property type="project" value="InterPro"/>
</dbReference>
<dbReference type="GO" id="GO:0030244">
    <property type="term" value="P:cellulose biosynthetic process"/>
    <property type="evidence" value="ECO:0007669"/>
    <property type="project" value="UniProtKB-KW"/>
</dbReference>
<dbReference type="Gene3D" id="1.25.40.10">
    <property type="entry name" value="Tetratricopeptide repeat domain"/>
    <property type="match status" value="5"/>
</dbReference>
<dbReference type="InterPro" id="IPR008410">
    <property type="entry name" value="BCSC_C"/>
</dbReference>
<dbReference type="InterPro" id="IPR011990">
    <property type="entry name" value="TPR-like_helical_dom_sf"/>
</dbReference>
<dbReference type="InterPro" id="IPR019734">
    <property type="entry name" value="TPR_rpt"/>
</dbReference>
<dbReference type="NCBIfam" id="NF008520">
    <property type="entry name" value="PRK11447.1"/>
    <property type="match status" value="1"/>
</dbReference>
<dbReference type="PANTHER" id="PTHR12558">
    <property type="entry name" value="CELL DIVISION CYCLE 16,23,27"/>
    <property type="match status" value="1"/>
</dbReference>
<dbReference type="PANTHER" id="PTHR12558:SF13">
    <property type="entry name" value="CELL DIVISION CYCLE PROTEIN 27 HOMOLOG"/>
    <property type="match status" value="1"/>
</dbReference>
<dbReference type="Pfam" id="PF05420">
    <property type="entry name" value="BCSC_C"/>
    <property type="match status" value="1"/>
</dbReference>
<dbReference type="Pfam" id="PF13432">
    <property type="entry name" value="TPR_16"/>
    <property type="match status" value="2"/>
</dbReference>
<dbReference type="Pfam" id="PF14559">
    <property type="entry name" value="TPR_19"/>
    <property type="match status" value="1"/>
</dbReference>
<dbReference type="SMART" id="SM00028">
    <property type="entry name" value="TPR"/>
    <property type="match status" value="7"/>
</dbReference>
<dbReference type="SUPFAM" id="SSF48452">
    <property type="entry name" value="TPR-like"/>
    <property type="match status" value="4"/>
</dbReference>
<dbReference type="PROSITE" id="PS50005">
    <property type="entry name" value="TPR"/>
    <property type="match status" value="6"/>
</dbReference>
<dbReference type="PROSITE" id="PS50293">
    <property type="entry name" value="TPR_REGION"/>
    <property type="match status" value="2"/>
</dbReference>
<reference key="1">
    <citation type="journal article" date="2001" name="Nature">
        <title>Genome sequence of enterohaemorrhagic Escherichia coli O157:H7.</title>
        <authorList>
            <person name="Perna N.T."/>
            <person name="Plunkett G. III"/>
            <person name="Burland V."/>
            <person name="Mau B."/>
            <person name="Glasner J.D."/>
            <person name="Rose D.J."/>
            <person name="Mayhew G.F."/>
            <person name="Evans P.S."/>
            <person name="Gregor J."/>
            <person name="Kirkpatrick H.A."/>
            <person name="Posfai G."/>
            <person name="Hackett J."/>
            <person name="Klink S."/>
            <person name="Boutin A."/>
            <person name="Shao Y."/>
            <person name="Miller L."/>
            <person name="Grotbeck E.J."/>
            <person name="Davis N.W."/>
            <person name="Lim A."/>
            <person name="Dimalanta E.T."/>
            <person name="Potamousis K."/>
            <person name="Apodaca J."/>
            <person name="Anantharaman T.S."/>
            <person name="Lin J."/>
            <person name="Yen G."/>
            <person name="Schwartz D.C."/>
            <person name="Welch R.A."/>
            <person name="Blattner F.R."/>
        </authorList>
    </citation>
    <scope>NUCLEOTIDE SEQUENCE [LARGE SCALE GENOMIC DNA]</scope>
    <source>
        <strain>O157:H7 / EDL933 / ATCC 700927 / EHEC</strain>
    </source>
</reference>
<reference key="2">
    <citation type="journal article" date="2001" name="DNA Res.">
        <title>Complete genome sequence of enterohemorrhagic Escherichia coli O157:H7 and genomic comparison with a laboratory strain K-12.</title>
        <authorList>
            <person name="Hayashi T."/>
            <person name="Makino K."/>
            <person name="Ohnishi M."/>
            <person name="Kurokawa K."/>
            <person name="Ishii K."/>
            <person name="Yokoyama K."/>
            <person name="Han C.-G."/>
            <person name="Ohtsubo E."/>
            <person name="Nakayama K."/>
            <person name="Murata T."/>
            <person name="Tanaka M."/>
            <person name="Tobe T."/>
            <person name="Iida T."/>
            <person name="Takami H."/>
            <person name="Honda T."/>
            <person name="Sasakawa C."/>
            <person name="Ogasawara N."/>
            <person name="Yasunaga T."/>
            <person name="Kuhara S."/>
            <person name="Shiba T."/>
            <person name="Hattori M."/>
            <person name="Shinagawa H."/>
        </authorList>
    </citation>
    <scope>NUCLEOTIDE SEQUENCE [LARGE SCALE GENOMIC DNA]</scope>
    <source>
        <strain>O157:H7 / Sakai / RIMD 0509952 / EHEC</strain>
    </source>
</reference>
<keyword id="KW-0135">Cellulose biosynthesis</keyword>
<keyword id="KW-1185">Reference proteome</keyword>
<keyword id="KW-0677">Repeat</keyword>
<keyword id="KW-0732">Signal</keyword>
<keyword id="KW-0802">TPR repeat</keyword>
<proteinExistence type="uncertain"/>
<comment type="function">
    <text evidence="1">Required for maximal bacterial cellulose synthesis.</text>
</comment>
<comment type="pathway">
    <text>Glycan metabolism; bacterial cellulose biosynthesis.</text>
</comment>
<comment type="similarity">
    <text evidence="3">Belongs to the AcsC/BcsC family.</text>
</comment>
<comment type="caution">
    <text evidence="3">Could be the product of a pseudogene.</text>
</comment>
<comment type="sequence caution" evidence="3">
    <conflict type="erroneous initiation">
        <sequence resource="EMBL-CDS" id="AAG58671"/>
    </conflict>
    <text>Truncated N-terminus.</text>
</comment>
<comment type="sequence caution" evidence="3">
    <conflict type="frameshift">
        <sequence resource="EMBL-CDS" id="AAG58671"/>
    </conflict>
</comment>
<comment type="sequence caution" evidence="3">
    <conflict type="frameshift">
        <sequence resource="EMBL-CDS" id="AAG58672"/>
    </conflict>
</comment>
<comment type="sequence caution" evidence="3">
    <conflict type="erroneous initiation">
        <sequence resource="EMBL-CDS" id="BAB37833"/>
    </conflict>
    <text>Truncated N-terminus.</text>
</comment>
<comment type="sequence caution" evidence="3">
    <conflict type="frameshift">
        <sequence resource="EMBL-CDS" id="BAB37833"/>
    </conflict>
</comment>
<accession>Q8X5M0</accession>
<accession>Q8X3J4</accession>